<dbReference type="EMBL" id="CP000038">
    <property type="protein sequence ID" value="AAZ89820.1"/>
    <property type="molecule type" value="Genomic_DNA"/>
</dbReference>
<dbReference type="RefSeq" id="WP_000211655.1">
    <property type="nucleotide sequence ID" value="NC_007384.1"/>
</dbReference>
<dbReference type="SMR" id="Q3YXE2"/>
<dbReference type="GeneID" id="93778898"/>
<dbReference type="KEGG" id="ssn:SSON_3242"/>
<dbReference type="HOGENOM" id="CLU_044581_0_0_6"/>
<dbReference type="Proteomes" id="UP000002529">
    <property type="component" value="Chromosome"/>
</dbReference>
<dbReference type="GO" id="GO:0005886">
    <property type="term" value="C:plasma membrane"/>
    <property type="evidence" value="ECO:0007669"/>
    <property type="project" value="UniProtKB-SubCell"/>
</dbReference>
<dbReference type="GO" id="GO:0005295">
    <property type="term" value="F:neutral L-amino acid:sodium symporter activity"/>
    <property type="evidence" value="ECO:0007669"/>
    <property type="project" value="TreeGrafter"/>
</dbReference>
<dbReference type="GO" id="GO:0032329">
    <property type="term" value="P:serine transport"/>
    <property type="evidence" value="ECO:0007669"/>
    <property type="project" value="InterPro"/>
</dbReference>
<dbReference type="GO" id="GO:0015826">
    <property type="term" value="P:threonine transport"/>
    <property type="evidence" value="ECO:0007669"/>
    <property type="project" value="InterPro"/>
</dbReference>
<dbReference type="FunFam" id="1.10.3860.10:FF:000003">
    <property type="entry name" value="Serine/threonine transporter sstT"/>
    <property type="match status" value="1"/>
</dbReference>
<dbReference type="Gene3D" id="1.10.3860.10">
    <property type="entry name" value="Sodium:dicarboxylate symporter"/>
    <property type="match status" value="1"/>
</dbReference>
<dbReference type="HAMAP" id="MF_01582">
    <property type="entry name" value="Ser_Thr_transp_SstT"/>
    <property type="match status" value="1"/>
</dbReference>
<dbReference type="InterPro" id="IPR001991">
    <property type="entry name" value="Na-dicarboxylate_symporter"/>
</dbReference>
<dbReference type="InterPro" id="IPR036458">
    <property type="entry name" value="Na:dicarbo_symporter_sf"/>
</dbReference>
<dbReference type="InterPro" id="IPR023025">
    <property type="entry name" value="Ser_Thr_transp_SstT"/>
</dbReference>
<dbReference type="NCBIfam" id="NF010151">
    <property type="entry name" value="PRK13628.1"/>
    <property type="match status" value="1"/>
</dbReference>
<dbReference type="PANTHER" id="PTHR42865">
    <property type="entry name" value="PROTON/GLUTAMATE-ASPARTATE SYMPORTER"/>
    <property type="match status" value="1"/>
</dbReference>
<dbReference type="PANTHER" id="PTHR42865:SF8">
    <property type="entry name" value="SERINE_THREONINE TRANSPORTER SSTT"/>
    <property type="match status" value="1"/>
</dbReference>
<dbReference type="Pfam" id="PF00375">
    <property type="entry name" value="SDF"/>
    <property type="match status" value="1"/>
</dbReference>
<dbReference type="PRINTS" id="PR00173">
    <property type="entry name" value="EDTRNSPORT"/>
</dbReference>
<dbReference type="SUPFAM" id="SSF118215">
    <property type="entry name" value="Proton glutamate symport protein"/>
    <property type="match status" value="1"/>
</dbReference>
<dbReference type="PROSITE" id="PS00713">
    <property type="entry name" value="NA_DICARBOXYL_SYMP_1"/>
    <property type="match status" value="1"/>
</dbReference>
<organism>
    <name type="scientific">Shigella sonnei (strain Ss046)</name>
    <dbReference type="NCBI Taxonomy" id="300269"/>
    <lineage>
        <taxon>Bacteria</taxon>
        <taxon>Pseudomonadati</taxon>
        <taxon>Pseudomonadota</taxon>
        <taxon>Gammaproteobacteria</taxon>
        <taxon>Enterobacterales</taxon>
        <taxon>Enterobacteriaceae</taxon>
        <taxon>Shigella</taxon>
    </lineage>
</organism>
<keyword id="KW-0029">Amino-acid transport</keyword>
<keyword id="KW-0997">Cell inner membrane</keyword>
<keyword id="KW-1003">Cell membrane</keyword>
<keyword id="KW-0472">Membrane</keyword>
<keyword id="KW-1185">Reference proteome</keyword>
<keyword id="KW-0769">Symport</keyword>
<keyword id="KW-0812">Transmembrane</keyword>
<keyword id="KW-1133">Transmembrane helix</keyword>
<keyword id="KW-0813">Transport</keyword>
<proteinExistence type="inferred from homology"/>
<gene>
    <name evidence="1" type="primary">sstT</name>
    <name type="ordered locus">SSON_3242</name>
</gene>
<sequence>MTTQRSPGLFRRLAHGSLVKQILVGLVLGILLAWISKPAAEAVGLLGTLFVGALKAVAPILVLMLVMASIANHQHGQKTNIRPILFLYLLGTFSAALAAVVFSFAFPSTLHLSSSAGDISPPSGIVEVMRGLVMSMVSNPIDALLKGNYIGILVWAIGLGFALRHGNETTKNLVNDMSNAVTFMVKLVIRFAPIGIFGLVSSTLATTGFSTLWGYAQLLVVLVGCMLLVALVVNPLLVWWKIRRNPFPLVLLCLRESGVYAFFTRSSAANIPVNMALCEKLNLDRDTYSVSIPLGATINMAGAAITITVLTLAAVNTLGIPVDLPTALLLSVVASLCACGASGVAGGSLLLIPLACNMFGISNDIAMQVVAVGFIIGVLQDSCETALNSSTDVLFTAAACQAEDDRLANSALRN</sequence>
<comment type="function">
    <text evidence="1">Involved in the import of serine and threonine into the cell, with the concomitant import of sodium (symport system).</text>
</comment>
<comment type="catalytic activity">
    <reaction evidence="1">
        <text>L-serine(in) + Na(+)(in) = L-serine(out) + Na(+)(out)</text>
        <dbReference type="Rhea" id="RHEA:29575"/>
        <dbReference type="ChEBI" id="CHEBI:29101"/>
        <dbReference type="ChEBI" id="CHEBI:33384"/>
    </reaction>
    <physiologicalReaction direction="right-to-left" evidence="1">
        <dbReference type="Rhea" id="RHEA:29577"/>
    </physiologicalReaction>
</comment>
<comment type="catalytic activity">
    <reaction evidence="1">
        <text>L-threonine(in) + Na(+)(in) = L-threonine(out) + Na(+)(out)</text>
        <dbReference type="Rhea" id="RHEA:69999"/>
        <dbReference type="ChEBI" id="CHEBI:29101"/>
        <dbReference type="ChEBI" id="CHEBI:57926"/>
    </reaction>
    <physiologicalReaction direction="right-to-left" evidence="1">
        <dbReference type="Rhea" id="RHEA:70001"/>
    </physiologicalReaction>
</comment>
<comment type="subcellular location">
    <subcellularLocation>
        <location evidence="1">Cell inner membrane</location>
        <topology evidence="1">Multi-pass membrane protein</topology>
    </subcellularLocation>
</comment>
<comment type="similarity">
    <text evidence="1">Belongs to the dicarboxylate/amino acid:cation symporter (DAACS) (TC 2.A.23) family.</text>
</comment>
<name>SSTT_SHISS</name>
<feature type="initiator methionine" description="Removed" evidence="1">
    <location>
        <position position="1"/>
    </location>
</feature>
<feature type="chain" id="PRO_0000309133" description="Serine/threonine transporter SstT">
    <location>
        <begin position="2"/>
        <end position="414"/>
    </location>
</feature>
<feature type="topological domain" description="Cytoplasmic" evidence="1">
    <location>
        <begin position="2"/>
        <end position="15"/>
    </location>
</feature>
<feature type="transmembrane region" description="Helical" evidence="1">
    <location>
        <begin position="16"/>
        <end position="36"/>
    </location>
</feature>
<feature type="topological domain" description="Periplasmic" evidence="1">
    <location>
        <begin position="37"/>
        <end position="45"/>
    </location>
</feature>
<feature type="transmembrane region" description="Helical" evidence="1">
    <location>
        <begin position="46"/>
        <end position="66"/>
    </location>
</feature>
<feature type="topological domain" description="Cytoplasmic" evidence="1">
    <location>
        <begin position="67"/>
        <end position="83"/>
    </location>
</feature>
<feature type="transmembrane region" description="Helical" evidence="1">
    <location>
        <begin position="84"/>
        <end position="104"/>
    </location>
</feature>
<feature type="topological domain" description="Periplasmic" evidence="1">
    <location>
        <begin position="105"/>
        <end position="142"/>
    </location>
</feature>
<feature type="transmembrane region" description="Helical" evidence="1">
    <location>
        <begin position="143"/>
        <end position="163"/>
    </location>
</feature>
<feature type="topological domain" description="Cytoplasmic" evidence="1">
    <location>
        <begin position="164"/>
        <end position="179"/>
    </location>
</feature>
<feature type="transmembrane region" description="Helical" evidence="1">
    <location>
        <begin position="180"/>
        <end position="200"/>
    </location>
</feature>
<feature type="topological domain" description="Periplasmic" evidence="1">
    <location>
        <begin position="201"/>
        <end position="217"/>
    </location>
</feature>
<feature type="transmembrane region" description="Helical" evidence="1">
    <location>
        <begin position="218"/>
        <end position="238"/>
    </location>
</feature>
<feature type="topological domain" description="Cytoplasmic" evidence="1">
    <location>
        <begin position="239"/>
        <end position="299"/>
    </location>
</feature>
<feature type="transmembrane region" description="Helical" evidence="1">
    <location>
        <begin position="300"/>
        <end position="320"/>
    </location>
</feature>
<feature type="topological domain" description="Periplasmic" evidence="1">
    <location>
        <begin position="321"/>
        <end position="331"/>
    </location>
</feature>
<feature type="transmembrane region" description="Helical" evidence="1">
    <location>
        <begin position="332"/>
        <end position="352"/>
    </location>
</feature>
<feature type="topological domain" description="Cytoplasmic" evidence="1">
    <location>
        <begin position="353"/>
        <end position="414"/>
    </location>
</feature>
<accession>Q3YXE2</accession>
<evidence type="ECO:0000255" key="1">
    <source>
        <dbReference type="HAMAP-Rule" id="MF_01582"/>
    </source>
</evidence>
<reference key="1">
    <citation type="journal article" date="2005" name="Nucleic Acids Res.">
        <title>Genome dynamics and diversity of Shigella species, the etiologic agents of bacillary dysentery.</title>
        <authorList>
            <person name="Yang F."/>
            <person name="Yang J."/>
            <person name="Zhang X."/>
            <person name="Chen L."/>
            <person name="Jiang Y."/>
            <person name="Yan Y."/>
            <person name="Tang X."/>
            <person name="Wang J."/>
            <person name="Xiong Z."/>
            <person name="Dong J."/>
            <person name="Xue Y."/>
            <person name="Zhu Y."/>
            <person name="Xu X."/>
            <person name="Sun L."/>
            <person name="Chen S."/>
            <person name="Nie H."/>
            <person name="Peng J."/>
            <person name="Xu J."/>
            <person name="Wang Y."/>
            <person name="Yuan Z."/>
            <person name="Wen Y."/>
            <person name="Yao Z."/>
            <person name="Shen Y."/>
            <person name="Qiang B."/>
            <person name="Hou Y."/>
            <person name="Yu J."/>
            <person name="Jin Q."/>
        </authorList>
    </citation>
    <scope>NUCLEOTIDE SEQUENCE [LARGE SCALE GENOMIC DNA]</scope>
    <source>
        <strain>Ss046</strain>
    </source>
</reference>
<protein>
    <recommendedName>
        <fullName evidence="1">Serine/threonine transporter SstT</fullName>
    </recommendedName>
    <alternativeName>
        <fullName evidence="1">Na(+)/serine-threonine symporter</fullName>
    </alternativeName>
</protein>